<comment type="similarity">
    <text evidence="1">Belongs to the CinA family.</text>
</comment>
<organism>
    <name type="scientific">Streptococcus equi subsp. equi (strain 4047)</name>
    <dbReference type="NCBI Taxonomy" id="553482"/>
    <lineage>
        <taxon>Bacteria</taxon>
        <taxon>Bacillati</taxon>
        <taxon>Bacillota</taxon>
        <taxon>Bacilli</taxon>
        <taxon>Lactobacillales</taxon>
        <taxon>Streptococcaceae</taxon>
        <taxon>Streptococcus</taxon>
    </lineage>
</organism>
<dbReference type="EMBL" id="FM204883">
    <property type="protein sequence ID" value="CAW95515.1"/>
    <property type="molecule type" value="Genomic_DNA"/>
</dbReference>
<dbReference type="RefSeq" id="WP_015898661.1">
    <property type="nucleotide sequence ID" value="NC_012471.1"/>
</dbReference>
<dbReference type="SMR" id="C0MAR7"/>
<dbReference type="KEGG" id="seu:SEQ_2153"/>
<dbReference type="HOGENOM" id="CLU_030805_9_3_9"/>
<dbReference type="OrthoDB" id="9801454at2"/>
<dbReference type="Proteomes" id="UP000001365">
    <property type="component" value="Chromosome"/>
</dbReference>
<dbReference type="CDD" id="cd00885">
    <property type="entry name" value="cinA"/>
    <property type="match status" value="1"/>
</dbReference>
<dbReference type="Gene3D" id="3.30.70.2860">
    <property type="match status" value="1"/>
</dbReference>
<dbReference type="Gene3D" id="3.90.950.20">
    <property type="entry name" value="CinA-like"/>
    <property type="match status" value="1"/>
</dbReference>
<dbReference type="Gene3D" id="3.40.980.10">
    <property type="entry name" value="MoaB/Mog-like domain"/>
    <property type="match status" value="1"/>
</dbReference>
<dbReference type="HAMAP" id="MF_00226_B">
    <property type="entry name" value="CinA_B"/>
    <property type="match status" value="1"/>
</dbReference>
<dbReference type="InterPro" id="IPR050101">
    <property type="entry name" value="CinA"/>
</dbReference>
<dbReference type="InterPro" id="IPR036653">
    <property type="entry name" value="CinA-like_C"/>
</dbReference>
<dbReference type="InterPro" id="IPR008136">
    <property type="entry name" value="CinA_C"/>
</dbReference>
<dbReference type="InterPro" id="IPR041424">
    <property type="entry name" value="CinA_KH"/>
</dbReference>
<dbReference type="InterPro" id="IPR008135">
    <property type="entry name" value="Competence-induced_CinA"/>
</dbReference>
<dbReference type="InterPro" id="IPR036425">
    <property type="entry name" value="MoaB/Mog-like_dom_sf"/>
</dbReference>
<dbReference type="InterPro" id="IPR001453">
    <property type="entry name" value="MoaB/Mog_dom"/>
</dbReference>
<dbReference type="NCBIfam" id="TIGR00200">
    <property type="entry name" value="cinA_nterm"/>
    <property type="match status" value="1"/>
</dbReference>
<dbReference type="NCBIfam" id="TIGR00177">
    <property type="entry name" value="molyb_syn"/>
    <property type="match status" value="1"/>
</dbReference>
<dbReference type="NCBIfam" id="TIGR00199">
    <property type="entry name" value="PncC_domain"/>
    <property type="match status" value="1"/>
</dbReference>
<dbReference type="NCBIfam" id="NF001813">
    <property type="entry name" value="PRK00549.1"/>
    <property type="match status" value="1"/>
</dbReference>
<dbReference type="PANTHER" id="PTHR13939">
    <property type="entry name" value="NICOTINAMIDE-NUCLEOTIDE AMIDOHYDROLASE PNCC"/>
    <property type="match status" value="1"/>
</dbReference>
<dbReference type="PANTHER" id="PTHR13939:SF0">
    <property type="entry name" value="NMN AMIDOHYDROLASE-LIKE PROTEIN YFAY"/>
    <property type="match status" value="1"/>
</dbReference>
<dbReference type="Pfam" id="PF02464">
    <property type="entry name" value="CinA"/>
    <property type="match status" value="1"/>
</dbReference>
<dbReference type="Pfam" id="PF18146">
    <property type="entry name" value="CinA_KH"/>
    <property type="match status" value="1"/>
</dbReference>
<dbReference type="Pfam" id="PF00994">
    <property type="entry name" value="MoCF_biosynth"/>
    <property type="match status" value="1"/>
</dbReference>
<dbReference type="PIRSF" id="PIRSF006728">
    <property type="entry name" value="CinA"/>
    <property type="match status" value="1"/>
</dbReference>
<dbReference type="SMART" id="SM00852">
    <property type="entry name" value="MoCF_biosynth"/>
    <property type="match status" value="1"/>
</dbReference>
<dbReference type="SUPFAM" id="SSF142433">
    <property type="entry name" value="CinA-like"/>
    <property type="match status" value="1"/>
</dbReference>
<dbReference type="SUPFAM" id="SSF53218">
    <property type="entry name" value="Molybdenum cofactor biosynthesis proteins"/>
    <property type="match status" value="1"/>
</dbReference>
<sequence>MKAELIAVGTEILTGQIVNTNAQFLSEKMAELGIDVYFQTAVGDNEERLLSVIDIASQRSDLVILCGGLGPTDDDLTKQTLAKYLGKALVFDEQAGQKLDAFFAHRKQAARTPNNQRQAQLIEGSIALQNQTGLAVGGLITVDRVTYVVLPGPPSELKPMVKNELVPLLSASHASLYSRVLRFFGIGESQLVTALEDLIKHQTDPTIAPYAKTGEVTLRLSTKADNQALADERLNRLEAQLLSIRTVDNQPLRRLLYGYGEDNSLARETFELLKRSGKTITAAESLTAGLFQAQLTDFAGASQVFNGGFITYSIEEKARMLGIPLGELQRHGVVSSFTAEQMAAQARCLTNSDIGIGLTGVAGPEALEGQPAGTVFIGLATKNKVESLKVVIGGRSRLDVRYIAALYAFNMVRKTLLKSENLL</sequence>
<gene>
    <name evidence="1" type="primary">cinA</name>
    <name type="ordered locus">SEQ_2153</name>
</gene>
<name>CINA_STRE4</name>
<evidence type="ECO:0000255" key="1">
    <source>
        <dbReference type="HAMAP-Rule" id="MF_00226"/>
    </source>
</evidence>
<accession>C0MAR7</accession>
<reference key="1">
    <citation type="journal article" date="2009" name="PLoS Pathog.">
        <title>Genomic evidence for the evolution of Streptococcus equi: host restriction, increased virulence, and genetic exchange with human pathogens.</title>
        <authorList>
            <person name="Holden M.T.G."/>
            <person name="Heather Z."/>
            <person name="Paillot R."/>
            <person name="Steward K.F."/>
            <person name="Webb K."/>
            <person name="Ainslie F."/>
            <person name="Jourdan T."/>
            <person name="Bason N.C."/>
            <person name="Holroyd N.E."/>
            <person name="Mungall K."/>
            <person name="Quail M.A."/>
            <person name="Sanders M."/>
            <person name="Simmonds M."/>
            <person name="Willey D."/>
            <person name="Brooks K."/>
            <person name="Aanensen D.M."/>
            <person name="Spratt B.G."/>
            <person name="Jolley K.A."/>
            <person name="Maiden M.C.J."/>
            <person name="Kehoe M."/>
            <person name="Chanter N."/>
            <person name="Bentley S.D."/>
            <person name="Robinson C."/>
            <person name="Maskell D.J."/>
            <person name="Parkhill J."/>
            <person name="Waller A.S."/>
        </authorList>
    </citation>
    <scope>NUCLEOTIDE SEQUENCE [LARGE SCALE GENOMIC DNA]</scope>
    <source>
        <strain>4047</strain>
    </source>
</reference>
<proteinExistence type="inferred from homology"/>
<feature type="chain" id="PRO_1000124989" description="Putative competence-damage inducible protein">
    <location>
        <begin position="1"/>
        <end position="423"/>
    </location>
</feature>
<protein>
    <recommendedName>
        <fullName evidence="1">Putative competence-damage inducible protein</fullName>
    </recommendedName>
</protein>